<accession>O94941</accession>
<accession>Q6IAR5</accession>
<accession>Q86X87</accession>
<accession>Q9H4J2</accession>
<name>RNF37_HUMAN</name>
<sequence>MVINLCLPQFRPRIHCNKISADGYEVENLISEDLTKRSHGFRTEYFIKPPVYVTVSFPFNVEICRINIDLTAGGGQNVTGLEMYTSASSSRVSWNTPQCRTLGPAEPSVPDKEAFTLVGKVLLKNQSQVVFSHRGFKARPPFGAMEATLPSPAVVAQELWNKGALSLSHVAHLRICITHVTGGGIPCIKRLEVWGQPAKTCSQEVIDSILLVTSENLPQDVALQAPALPMESDCDPGDQPESQQAPSSLQKLAEIIQDVPEEFLDPITLEIMPCPMLLPSGKVIDQSTLEKCNRSEATWGRVPSDPFTGVAFTPHSQPLPHPSLKARIDHFLLQHSIPGCHLLGRAQTALAVIPSSIVLPSQKRKIEQAEHVPDSNFGVNASCFSATSPLVLPTTSEHTAKKMKATNEPSLTHMDCSTGPLSHEQKLSQSLEIALASTLGSMPSFTARLTRGQLQHLGTRGSNTSWRPGTGSEQPGSILGPECASCKRVFSPYFKKEPVYQLPCGHLLCRPCLGEKQRSLPMTCTACQRPVASQDVLRVHF</sequence>
<gene>
    <name evidence="12" type="primary">UBOX5</name>
    <name evidence="10" type="synonym">KIAA0860</name>
    <name evidence="9" type="synonym">RNF37</name>
    <name evidence="11" type="synonym">UBCE7IP5</name>
    <name evidence="5" type="synonym">UIP5</name>
</gene>
<keyword id="KW-0025">Alternative splicing</keyword>
<keyword id="KW-0479">Metal-binding</keyword>
<keyword id="KW-0488">Methylation</keyword>
<keyword id="KW-0539">Nucleus</keyword>
<keyword id="KW-1267">Proteomics identification</keyword>
<keyword id="KW-1185">Reference proteome</keyword>
<keyword id="KW-0808">Transferase</keyword>
<keyword id="KW-0833">Ubl conjugation pathway</keyword>
<keyword id="KW-0862">Zinc</keyword>
<keyword id="KW-0863">Zinc-finger</keyword>
<proteinExistence type="evidence at protein level"/>
<organism>
    <name type="scientific">Homo sapiens</name>
    <name type="common">Human</name>
    <dbReference type="NCBI Taxonomy" id="9606"/>
    <lineage>
        <taxon>Eukaryota</taxon>
        <taxon>Metazoa</taxon>
        <taxon>Chordata</taxon>
        <taxon>Craniata</taxon>
        <taxon>Vertebrata</taxon>
        <taxon>Euteleostomi</taxon>
        <taxon>Mammalia</taxon>
        <taxon>Eutheria</taxon>
        <taxon>Euarchontoglires</taxon>
        <taxon>Primates</taxon>
        <taxon>Haplorrhini</taxon>
        <taxon>Catarrhini</taxon>
        <taxon>Hominidae</taxon>
        <taxon>Homo</taxon>
    </lineage>
</organism>
<dbReference type="EC" id="2.3.2.27" evidence="1"/>
<dbReference type="EMBL" id="AB020667">
    <property type="protein sequence ID" value="BAA74883.2"/>
    <property type="status" value="ALT_INIT"/>
    <property type="molecule type" value="mRNA"/>
</dbReference>
<dbReference type="EMBL" id="AK022444">
    <property type="protein sequence ID" value="BAG51073.1"/>
    <property type="molecule type" value="mRNA"/>
</dbReference>
<dbReference type="EMBL" id="CR457089">
    <property type="protein sequence ID" value="CAG33370.1"/>
    <property type="molecule type" value="mRNA"/>
</dbReference>
<dbReference type="EMBL" id="AL121891">
    <property type="status" value="NOT_ANNOTATED_CDS"/>
    <property type="molecule type" value="Genomic_DNA"/>
</dbReference>
<dbReference type="EMBL" id="CH471133">
    <property type="protein sequence ID" value="EAX10550.1"/>
    <property type="molecule type" value="Genomic_DNA"/>
</dbReference>
<dbReference type="EMBL" id="CH471133">
    <property type="protein sequence ID" value="EAX10551.1"/>
    <property type="molecule type" value="Genomic_DNA"/>
</dbReference>
<dbReference type="EMBL" id="BC000515">
    <property type="protein sequence ID" value="AAH00515.1"/>
    <property type="molecule type" value="mRNA"/>
</dbReference>
<dbReference type="EMBL" id="BC046122">
    <property type="protein sequence ID" value="AAH46122.1"/>
    <property type="molecule type" value="mRNA"/>
</dbReference>
<dbReference type="CCDS" id="CCDS13046.1">
    <molecule id="O94941-1"/>
</dbReference>
<dbReference type="CCDS" id="CCDS13047.1">
    <molecule id="O94941-2"/>
</dbReference>
<dbReference type="RefSeq" id="NP_055763.1">
    <molecule id="O94941-1"/>
    <property type="nucleotide sequence ID" value="NM_014948.4"/>
</dbReference>
<dbReference type="RefSeq" id="NP_955447.1">
    <molecule id="O94941-2"/>
    <property type="nucleotide sequence ID" value="NM_199415.3"/>
</dbReference>
<dbReference type="SMR" id="O94941"/>
<dbReference type="BioGRID" id="116554">
    <property type="interactions" value="25"/>
</dbReference>
<dbReference type="FunCoup" id="O94941">
    <property type="interactions" value="1947"/>
</dbReference>
<dbReference type="IntAct" id="O94941">
    <property type="interactions" value="20"/>
</dbReference>
<dbReference type="STRING" id="9606.ENSP00000217173"/>
<dbReference type="GlyGen" id="O94941">
    <property type="glycosylation" value="2 sites, 1 O-linked glycan (1 site)"/>
</dbReference>
<dbReference type="iPTMnet" id="O94941"/>
<dbReference type="PhosphoSitePlus" id="O94941"/>
<dbReference type="BioMuta" id="UBOX5"/>
<dbReference type="jPOST" id="O94941"/>
<dbReference type="MassIVE" id="O94941"/>
<dbReference type="PaxDb" id="9606-ENSP00000217173"/>
<dbReference type="PeptideAtlas" id="O94941"/>
<dbReference type="ProteomicsDB" id="50570">
    <molecule id="O94941-1"/>
</dbReference>
<dbReference type="ProteomicsDB" id="50571">
    <molecule id="O94941-2"/>
</dbReference>
<dbReference type="Pumba" id="O94941"/>
<dbReference type="Antibodypedia" id="23444">
    <property type="antibodies" value="208 antibodies from 21 providers"/>
</dbReference>
<dbReference type="DNASU" id="22888"/>
<dbReference type="Ensembl" id="ENST00000217173.7">
    <molecule id="O94941-1"/>
    <property type="protein sequence ID" value="ENSP00000217173.2"/>
    <property type="gene ID" value="ENSG00000185019.17"/>
</dbReference>
<dbReference type="Ensembl" id="ENST00000348031.6">
    <molecule id="O94941-2"/>
    <property type="protein sequence ID" value="ENSP00000311726.3"/>
    <property type="gene ID" value="ENSG00000185019.17"/>
</dbReference>
<dbReference type="GeneID" id="22888"/>
<dbReference type="KEGG" id="hsa:22888"/>
<dbReference type="MANE-Select" id="ENST00000217173.7">
    <property type="protein sequence ID" value="ENSP00000217173.2"/>
    <property type="RefSeq nucleotide sequence ID" value="NM_014948.4"/>
    <property type="RefSeq protein sequence ID" value="NP_055763.1"/>
</dbReference>
<dbReference type="UCSC" id="uc002whw.5">
    <molecule id="O94941-1"/>
    <property type="organism name" value="human"/>
</dbReference>
<dbReference type="AGR" id="HGNC:17777"/>
<dbReference type="CTD" id="22888"/>
<dbReference type="DisGeNET" id="22888"/>
<dbReference type="GeneCards" id="UBOX5"/>
<dbReference type="HGNC" id="HGNC:17777">
    <property type="gene designation" value="UBOX5"/>
</dbReference>
<dbReference type="HPA" id="ENSG00000185019">
    <property type="expression patterns" value="Low tissue specificity"/>
</dbReference>
<dbReference type="MIM" id="619675">
    <property type="type" value="gene"/>
</dbReference>
<dbReference type="neXtProt" id="NX_O94941"/>
<dbReference type="OpenTargets" id="ENSG00000185019"/>
<dbReference type="PharmGKB" id="PA134991794"/>
<dbReference type="VEuPathDB" id="HostDB:ENSG00000185019"/>
<dbReference type="eggNOG" id="KOG2042">
    <property type="taxonomic scope" value="Eukaryota"/>
</dbReference>
<dbReference type="GeneTree" id="ENSGT00510000049555"/>
<dbReference type="HOGENOM" id="CLU_038691_0_0_1"/>
<dbReference type="InParanoid" id="O94941"/>
<dbReference type="OMA" id="FKKEPMY"/>
<dbReference type="OrthoDB" id="20295at2759"/>
<dbReference type="PAN-GO" id="O94941">
    <property type="GO annotations" value="4 GO annotations based on evolutionary models"/>
</dbReference>
<dbReference type="PhylomeDB" id="O94941"/>
<dbReference type="TreeFam" id="TF329105"/>
<dbReference type="PathwayCommons" id="O94941"/>
<dbReference type="Reactome" id="R-HSA-983168">
    <property type="pathway name" value="Antigen processing: Ubiquitination &amp; Proteasome degradation"/>
</dbReference>
<dbReference type="SignaLink" id="O94941"/>
<dbReference type="SIGNOR" id="O94941"/>
<dbReference type="UniPathway" id="UPA00143"/>
<dbReference type="BioGRID-ORCS" id="22888">
    <property type="hits" value="20 hits in 1196 CRISPR screens"/>
</dbReference>
<dbReference type="ChiTaRS" id="UBOX5">
    <property type="organism name" value="human"/>
</dbReference>
<dbReference type="GeneWiki" id="UBOX5"/>
<dbReference type="GenomeRNAi" id="22888"/>
<dbReference type="Pharos" id="O94941">
    <property type="development level" value="Tbio"/>
</dbReference>
<dbReference type="PRO" id="PR:O94941"/>
<dbReference type="Proteomes" id="UP000005640">
    <property type="component" value="Chromosome 20"/>
</dbReference>
<dbReference type="RNAct" id="O94941">
    <property type="molecule type" value="protein"/>
</dbReference>
<dbReference type="Bgee" id="ENSG00000185019">
    <property type="expression patterns" value="Expressed in primordial germ cell in gonad and 167 other cell types or tissues"/>
</dbReference>
<dbReference type="ExpressionAtlas" id="O94941">
    <property type="expression patterns" value="baseline and differential"/>
</dbReference>
<dbReference type="GO" id="GO:0005925">
    <property type="term" value="C:focal adhesion"/>
    <property type="evidence" value="ECO:0000314"/>
    <property type="project" value="HPA"/>
</dbReference>
<dbReference type="GO" id="GO:0016604">
    <property type="term" value="C:nuclear body"/>
    <property type="evidence" value="ECO:0000314"/>
    <property type="project" value="UniProtKB"/>
</dbReference>
<dbReference type="GO" id="GO:0005654">
    <property type="term" value="C:nucleoplasm"/>
    <property type="evidence" value="ECO:0000314"/>
    <property type="project" value="HPA"/>
</dbReference>
<dbReference type="GO" id="GO:0005634">
    <property type="term" value="C:nucleus"/>
    <property type="evidence" value="ECO:0000250"/>
    <property type="project" value="UniProtKB"/>
</dbReference>
<dbReference type="GO" id="GO:0031625">
    <property type="term" value="F:ubiquitin protein ligase binding"/>
    <property type="evidence" value="ECO:0000353"/>
    <property type="project" value="UniProtKB"/>
</dbReference>
<dbReference type="GO" id="GO:0034450">
    <property type="term" value="F:ubiquitin-ubiquitin ligase activity"/>
    <property type="evidence" value="ECO:0000250"/>
    <property type="project" value="UniProtKB"/>
</dbReference>
<dbReference type="GO" id="GO:0008270">
    <property type="term" value="F:zinc ion binding"/>
    <property type="evidence" value="ECO:0007669"/>
    <property type="project" value="UniProtKB-KW"/>
</dbReference>
<dbReference type="GO" id="GO:0000209">
    <property type="term" value="P:protein polyubiquitination"/>
    <property type="evidence" value="ECO:0000250"/>
    <property type="project" value="UniProtKB"/>
</dbReference>
<dbReference type="CDD" id="cd16537">
    <property type="entry name" value="RING-HC_RNF37"/>
    <property type="match status" value="1"/>
</dbReference>
<dbReference type="CDD" id="cd16660">
    <property type="entry name" value="RING-Ubox_RNF37"/>
    <property type="match status" value="1"/>
</dbReference>
<dbReference type="FunFam" id="3.30.40.10:FF:000163">
    <property type="entry name" value="Putative ring finger protein 37"/>
    <property type="match status" value="1"/>
</dbReference>
<dbReference type="FunFam" id="3.30.40.10:FF:000481">
    <property type="entry name" value="U-box domain containing 5"/>
    <property type="match status" value="1"/>
</dbReference>
<dbReference type="Gene3D" id="3.30.40.10">
    <property type="entry name" value="Zinc/RING finger domain, C3HC4 (zinc finger)"/>
    <property type="match status" value="2"/>
</dbReference>
<dbReference type="InterPro" id="IPR039925">
    <property type="entry name" value="RNF37_RING-Ubox"/>
</dbReference>
<dbReference type="InterPro" id="IPR039847">
    <property type="entry name" value="Ubox5"/>
</dbReference>
<dbReference type="InterPro" id="IPR045696">
    <property type="entry name" value="Ubox5_N"/>
</dbReference>
<dbReference type="InterPro" id="IPR003613">
    <property type="entry name" value="Ubox_domain"/>
</dbReference>
<dbReference type="InterPro" id="IPR001841">
    <property type="entry name" value="Znf_RING"/>
</dbReference>
<dbReference type="InterPro" id="IPR013083">
    <property type="entry name" value="Znf_RING/FYVE/PHD"/>
</dbReference>
<dbReference type="InterPro" id="IPR017907">
    <property type="entry name" value="Znf_RING_CS"/>
</dbReference>
<dbReference type="PANTHER" id="PTHR13492">
    <property type="entry name" value="RING FINGER PROTEIN 37"/>
    <property type="match status" value="1"/>
</dbReference>
<dbReference type="PANTHER" id="PTHR13492:SF2">
    <property type="entry name" value="RING FINGER PROTEIN 37"/>
    <property type="match status" value="1"/>
</dbReference>
<dbReference type="Pfam" id="PF19318">
    <property type="entry name" value="DUF5918"/>
    <property type="match status" value="1"/>
</dbReference>
<dbReference type="Pfam" id="PF04564">
    <property type="entry name" value="U-box"/>
    <property type="match status" value="1"/>
</dbReference>
<dbReference type="Pfam" id="PF14634">
    <property type="entry name" value="zf-RING_5"/>
    <property type="match status" value="1"/>
</dbReference>
<dbReference type="SMART" id="SM00504">
    <property type="entry name" value="Ubox"/>
    <property type="match status" value="1"/>
</dbReference>
<dbReference type="SUPFAM" id="SSF57850">
    <property type="entry name" value="RING/U-box"/>
    <property type="match status" value="2"/>
</dbReference>
<dbReference type="PROSITE" id="PS51698">
    <property type="entry name" value="U_BOX"/>
    <property type="match status" value="1"/>
</dbReference>
<dbReference type="PROSITE" id="PS00518">
    <property type="entry name" value="ZF_RING_1"/>
    <property type="match status" value="1"/>
</dbReference>
<dbReference type="PROSITE" id="PS50089">
    <property type="entry name" value="ZF_RING_2"/>
    <property type="match status" value="1"/>
</dbReference>
<comment type="function">
    <text evidence="1">May have a ubiquitin-protein ligase activity acting as an E3 ubiquitin-protein ligase or as a ubiquitin-ubiquitin ligase promoting elongation of ubiquitin chains on substrates.</text>
</comment>
<comment type="catalytic activity">
    <reaction evidence="1">
        <text>S-ubiquitinyl-[E2 ubiquitin-conjugating enzyme]-L-cysteine + [acceptor protein]-L-lysine = [E2 ubiquitin-conjugating enzyme]-L-cysteine + N(6)-ubiquitinyl-[acceptor protein]-L-lysine.</text>
        <dbReference type="EC" id="2.3.2.27"/>
    </reaction>
</comment>
<comment type="pathway">
    <text evidence="1">Protein modification; protein ubiquitination.</text>
</comment>
<comment type="subunit">
    <text evidence="1 3">Interacts with UBE2L3. Interacts with VCP.</text>
</comment>
<comment type="interaction">
    <interactant intactId="EBI-751901">
        <id>O94941</id>
    </interactant>
    <interactant intactId="EBI-930964">
        <id>P54253</id>
        <label>ATXN1</label>
    </interactant>
    <organismsDiffer>false</organismsDiffer>
    <experiments>6</experiments>
</comment>
<comment type="interaction">
    <interactant intactId="EBI-751901">
        <id>O94941</id>
    </interactant>
    <interactant intactId="EBI-744248">
        <id>P40692</id>
        <label>MLH1</label>
    </interactant>
    <organismsDiffer>false</organismsDiffer>
    <experiments>7</experiments>
</comment>
<comment type="interaction">
    <interactant intactId="EBI-751901">
        <id>O94941</id>
    </interactant>
    <interactant intactId="EBI-372899">
        <id>Q13148</id>
        <label>TARDBP</label>
    </interactant>
    <organismsDiffer>false</organismsDiffer>
    <experiments>3</experiments>
</comment>
<comment type="interaction">
    <interactant intactId="EBI-751901">
        <id>O94941</id>
    </interactant>
    <interactant intactId="EBI-355164">
        <id>P55072</id>
        <label>VCP</label>
    </interactant>
    <organismsDiffer>false</organismsDiffer>
    <experiments>6</experiments>
</comment>
<comment type="subcellular location">
    <subcellularLocation>
        <location evidence="3 4">Nucleus</location>
    </subcellularLocation>
    <text evidence="3">Enriched in nuclear bodies.</text>
</comment>
<comment type="alternative products">
    <event type="alternative splicing"/>
    <isoform>
        <id>O94941-1</id>
        <name>1</name>
        <sequence type="displayed"/>
    </isoform>
    <isoform>
        <id>O94941-2</id>
        <name>2</name>
        <sequence type="described" ref="VSP_042899"/>
    </isoform>
</comment>
<comment type="tissue specificity">
    <text evidence="4">Expressed in liver, heart, brain, kidney and testis.</text>
</comment>
<comment type="domain">
    <text evidence="4 6">The U-box domain mediates interaction with E2 ubiquitin ligases and is required for the ubiquitin-protein ligase activity.</text>
</comment>
<comment type="sequence caution" evidence="9">
    <conflict type="erroneous initiation">
        <sequence resource="EMBL-CDS" id="BAA74883"/>
    </conflict>
</comment>
<feature type="chain" id="PRO_0000056076" description="RING finger protein 37">
    <location>
        <begin position="1"/>
        <end position="541"/>
    </location>
</feature>
<feature type="domain" description="U-box">
    <location>
        <begin position="258"/>
        <end position="338"/>
    </location>
</feature>
<feature type="zinc finger region" description="RING-type" evidence="2">
    <location>
        <begin position="483"/>
        <end position="528"/>
    </location>
</feature>
<feature type="modified residue" description="Asymmetric dimethylarginine" evidence="13">
    <location>
        <position position="451"/>
    </location>
</feature>
<feature type="splice variant" id="VSP_042899" description="In isoform 2." evidence="7 8">
    <location>
        <begin position="419"/>
        <end position="472"/>
    </location>
</feature>
<feature type="sequence variant" id="VAR_046402" description="In dbSNP:rs999409.">
    <original>T</original>
    <variation>M</variation>
    <location>
        <position position="96"/>
    </location>
</feature>
<feature type="sequence variant" id="VAR_046403" description="In dbSNP:rs34205880.">
    <original>L</original>
    <variation>P</variation>
    <location>
        <position position="479"/>
    </location>
</feature>
<reference key="1">
    <citation type="journal article" date="1998" name="DNA Res.">
        <title>Prediction of the coding sequences of unidentified human genes. XII. The complete sequences of 100 new cDNA clones from brain which code for large proteins in vitro.</title>
        <authorList>
            <person name="Nagase T."/>
            <person name="Ishikawa K."/>
            <person name="Suyama M."/>
            <person name="Kikuno R."/>
            <person name="Hirosawa M."/>
            <person name="Miyajima N."/>
            <person name="Tanaka A."/>
            <person name="Kotani H."/>
            <person name="Nomura N."/>
            <person name="Ohara O."/>
        </authorList>
    </citation>
    <scope>NUCLEOTIDE SEQUENCE [LARGE SCALE MRNA] (ISOFORM 1)</scope>
    <source>
        <tissue>Brain</tissue>
    </source>
</reference>
<reference key="2">
    <citation type="journal article" date="2004" name="Nat. Genet.">
        <title>Complete sequencing and characterization of 21,243 full-length human cDNAs.</title>
        <authorList>
            <person name="Ota T."/>
            <person name="Suzuki Y."/>
            <person name="Nishikawa T."/>
            <person name="Otsuki T."/>
            <person name="Sugiyama T."/>
            <person name="Irie R."/>
            <person name="Wakamatsu A."/>
            <person name="Hayashi K."/>
            <person name="Sato H."/>
            <person name="Nagai K."/>
            <person name="Kimura K."/>
            <person name="Makita H."/>
            <person name="Sekine M."/>
            <person name="Obayashi M."/>
            <person name="Nishi T."/>
            <person name="Shibahara T."/>
            <person name="Tanaka T."/>
            <person name="Ishii S."/>
            <person name="Yamamoto J."/>
            <person name="Saito K."/>
            <person name="Kawai Y."/>
            <person name="Isono Y."/>
            <person name="Nakamura Y."/>
            <person name="Nagahari K."/>
            <person name="Murakami K."/>
            <person name="Yasuda T."/>
            <person name="Iwayanagi T."/>
            <person name="Wagatsuma M."/>
            <person name="Shiratori A."/>
            <person name="Sudo H."/>
            <person name="Hosoiri T."/>
            <person name="Kaku Y."/>
            <person name="Kodaira H."/>
            <person name="Kondo H."/>
            <person name="Sugawara M."/>
            <person name="Takahashi M."/>
            <person name="Kanda K."/>
            <person name="Yokoi T."/>
            <person name="Furuya T."/>
            <person name="Kikkawa E."/>
            <person name="Omura Y."/>
            <person name="Abe K."/>
            <person name="Kamihara K."/>
            <person name="Katsuta N."/>
            <person name="Sato K."/>
            <person name="Tanikawa M."/>
            <person name="Yamazaki M."/>
            <person name="Ninomiya K."/>
            <person name="Ishibashi T."/>
            <person name="Yamashita H."/>
            <person name="Murakawa K."/>
            <person name="Fujimori K."/>
            <person name="Tanai H."/>
            <person name="Kimata M."/>
            <person name="Watanabe M."/>
            <person name="Hiraoka S."/>
            <person name="Chiba Y."/>
            <person name="Ishida S."/>
            <person name="Ono Y."/>
            <person name="Takiguchi S."/>
            <person name="Watanabe S."/>
            <person name="Yosida M."/>
            <person name="Hotuta T."/>
            <person name="Kusano J."/>
            <person name="Kanehori K."/>
            <person name="Takahashi-Fujii A."/>
            <person name="Hara H."/>
            <person name="Tanase T.-O."/>
            <person name="Nomura Y."/>
            <person name="Togiya S."/>
            <person name="Komai F."/>
            <person name="Hara R."/>
            <person name="Takeuchi K."/>
            <person name="Arita M."/>
            <person name="Imose N."/>
            <person name="Musashino K."/>
            <person name="Yuuki H."/>
            <person name="Oshima A."/>
            <person name="Sasaki N."/>
            <person name="Aotsuka S."/>
            <person name="Yoshikawa Y."/>
            <person name="Matsunawa H."/>
            <person name="Ichihara T."/>
            <person name="Shiohata N."/>
            <person name="Sano S."/>
            <person name="Moriya S."/>
            <person name="Momiyama H."/>
            <person name="Satoh N."/>
            <person name="Takami S."/>
            <person name="Terashima Y."/>
            <person name="Suzuki O."/>
            <person name="Nakagawa S."/>
            <person name="Senoh A."/>
            <person name="Mizoguchi H."/>
            <person name="Goto Y."/>
            <person name="Shimizu F."/>
            <person name="Wakebe H."/>
            <person name="Hishigaki H."/>
            <person name="Watanabe T."/>
            <person name="Sugiyama A."/>
            <person name="Takemoto M."/>
            <person name="Kawakami B."/>
            <person name="Yamazaki M."/>
            <person name="Watanabe K."/>
            <person name="Kumagai A."/>
            <person name="Itakura S."/>
            <person name="Fukuzumi Y."/>
            <person name="Fujimori Y."/>
            <person name="Komiyama M."/>
            <person name="Tashiro H."/>
            <person name="Tanigami A."/>
            <person name="Fujiwara T."/>
            <person name="Ono T."/>
            <person name="Yamada K."/>
            <person name="Fujii Y."/>
            <person name="Ozaki K."/>
            <person name="Hirao M."/>
            <person name="Ohmori Y."/>
            <person name="Kawabata A."/>
            <person name="Hikiji T."/>
            <person name="Kobatake N."/>
            <person name="Inagaki H."/>
            <person name="Ikema Y."/>
            <person name="Okamoto S."/>
            <person name="Okitani R."/>
            <person name="Kawakami T."/>
            <person name="Noguchi S."/>
            <person name="Itoh T."/>
            <person name="Shigeta K."/>
            <person name="Senba T."/>
            <person name="Matsumura K."/>
            <person name="Nakajima Y."/>
            <person name="Mizuno T."/>
            <person name="Morinaga M."/>
            <person name="Sasaki M."/>
            <person name="Togashi T."/>
            <person name="Oyama M."/>
            <person name="Hata H."/>
            <person name="Watanabe M."/>
            <person name="Komatsu T."/>
            <person name="Mizushima-Sugano J."/>
            <person name="Satoh T."/>
            <person name="Shirai Y."/>
            <person name="Takahashi Y."/>
            <person name="Nakagawa K."/>
            <person name="Okumura K."/>
            <person name="Nagase T."/>
            <person name="Nomura N."/>
            <person name="Kikuchi H."/>
            <person name="Masuho Y."/>
            <person name="Yamashita R."/>
            <person name="Nakai K."/>
            <person name="Yada T."/>
            <person name="Nakamura Y."/>
            <person name="Ohara O."/>
            <person name="Isogai T."/>
            <person name="Sugano S."/>
        </authorList>
    </citation>
    <scope>NUCLEOTIDE SEQUENCE [LARGE SCALE MRNA] (ISOFORM 2)</scope>
    <source>
        <tissue>Mammary gland</tissue>
    </source>
</reference>
<reference key="3">
    <citation type="submission" date="2004-06" db="EMBL/GenBank/DDBJ databases">
        <title>Cloning of human full open reading frames in Gateway(TM) system entry vector (pDONR201).</title>
        <authorList>
            <person name="Ebert L."/>
            <person name="Schick M."/>
            <person name="Neubert P."/>
            <person name="Schatten R."/>
            <person name="Henze S."/>
            <person name="Korn B."/>
        </authorList>
    </citation>
    <scope>NUCLEOTIDE SEQUENCE [LARGE SCALE MRNA] (ISOFORM 1)</scope>
</reference>
<reference key="4">
    <citation type="journal article" date="2001" name="Nature">
        <title>The DNA sequence and comparative analysis of human chromosome 20.</title>
        <authorList>
            <person name="Deloukas P."/>
            <person name="Matthews L.H."/>
            <person name="Ashurst J.L."/>
            <person name="Burton J."/>
            <person name="Gilbert J.G.R."/>
            <person name="Jones M."/>
            <person name="Stavrides G."/>
            <person name="Almeida J.P."/>
            <person name="Babbage A.K."/>
            <person name="Bagguley C.L."/>
            <person name="Bailey J."/>
            <person name="Barlow K.F."/>
            <person name="Bates K.N."/>
            <person name="Beard L.M."/>
            <person name="Beare D.M."/>
            <person name="Beasley O.P."/>
            <person name="Bird C.P."/>
            <person name="Blakey S.E."/>
            <person name="Bridgeman A.M."/>
            <person name="Brown A.J."/>
            <person name="Buck D."/>
            <person name="Burrill W.D."/>
            <person name="Butler A.P."/>
            <person name="Carder C."/>
            <person name="Carter N.P."/>
            <person name="Chapman J.C."/>
            <person name="Clamp M."/>
            <person name="Clark G."/>
            <person name="Clark L.N."/>
            <person name="Clark S.Y."/>
            <person name="Clee C.M."/>
            <person name="Clegg S."/>
            <person name="Cobley V.E."/>
            <person name="Collier R.E."/>
            <person name="Connor R.E."/>
            <person name="Corby N.R."/>
            <person name="Coulson A."/>
            <person name="Coville G.J."/>
            <person name="Deadman R."/>
            <person name="Dhami P.D."/>
            <person name="Dunn M."/>
            <person name="Ellington A.G."/>
            <person name="Frankland J.A."/>
            <person name="Fraser A."/>
            <person name="French L."/>
            <person name="Garner P."/>
            <person name="Grafham D.V."/>
            <person name="Griffiths C."/>
            <person name="Griffiths M.N.D."/>
            <person name="Gwilliam R."/>
            <person name="Hall R.E."/>
            <person name="Hammond S."/>
            <person name="Harley J.L."/>
            <person name="Heath P.D."/>
            <person name="Ho S."/>
            <person name="Holden J.L."/>
            <person name="Howden P.J."/>
            <person name="Huckle E."/>
            <person name="Hunt A.R."/>
            <person name="Hunt S.E."/>
            <person name="Jekosch K."/>
            <person name="Johnson C.M."/>
            <person name="Johnson D."/>
            <person name="Kay M.P."/>
            <person name="Kimberley A.M."/>
            <person name="King A."/>
            <person name="Knights A."/>
            <person name="Laird G.K."/>
            <person name="Lawlor S."/>
            <person name="Lehvaeslaiho M.H."/>
            <person name="Leversha M.A."/>
            <person name="Lloyd C."/>
            <person name="Lloyd D.M."/>
            <person name="Lovell J.D."/>
            <person name="Marsh V.L."/>
            <person name="Martin S.L."/>
            <person name="McConnachie L.J."/>
            <person name="McLay K."/>
            <person name="McMurray A.A."/>
            <person name="Milne S.A."/>
            <person name="Mistry D."/>
            <person name="Moore M.J.F."/>
            <person name="Mullikin J.C."/>
            <person name="Nickerson T."/>
            <person name="Oliver K."/>
            <person name="Parker A."/>
            <person name="Patel R."/>
            <person name="Pearce T.A.V."/>
            <person name="Peck A.I."/>
            <person name="Phillimore B.J.C.T."/>
            <person name="Prathalingam S.R."/>
            <person name="Plumb R.W."/>
            <person name="Ramsay H."/>
            <person name="Rice C.M."/>
            <person name="Ross M.T."/>
            <person name="Scott C.E."/>
            <person name="Sehra H.K."/>
            <person name="Shownkeen R."/>
            <person name="Sims S."/>
            <person name="Skuce C.D."/>
            <person name="Smith M.L."/>
            <person name="Soderlund C."/>
            <person name="Steward C.A."/>
            <person name="Sulston J.E."/>
            <person name="Swann R.M."/>
            <person name="Sycamore N."/>
            <person name="Taylor R."/>
            <person name="Tee L."/>
            <person name="Thomas D.W."/>
            <person name="Thorpe A."/>
            <person name="Tracey A."/>
            <person name="Tromans A.C."/>
            <person name="Vaudin M."/>
            <person name="Wall M."/>
            <person name="Wallis J.M."/>
            <person name="Whitehead S.L."/>
            <person name="Whittaker P."/>
            <person name="Willey D.L."/>
            <person name="Williams L."/>
            <person name="Williams S.A."/>
            <person name="Wilming L."/>
            <person name="Wray P.W."/>
            <person name="Hubbard T."/>
            <person name="Durbin R.M."/>
            <person name="Bentley D.R."/>
            <person name="Beck S."/>
            <person name="Rogers J."/>
        </authorList>
    </citation>
    <scope>NUCLEOTIDE SEQUENCE [LARGE SCALE GENOMIC DNA]</scope>
</reference>
<reference key="5">
    <citation type="submission" date="2005-09" db="EMBL/GenBank/DDBJ databases">
        <authorList>
            <person name="Mural R.J."/>
            <person name="Istrail S."/>
            <person name="Sutton G.G."/>
            <person name="Florea L."/>
            <person name="Halpern A.L."/>
            <person name="Mobarry C.M."/>
            <person name="Lippert R."/>
            <person name="Walenz B."/>
            <person name="Shatkay H."/>
            <person name="Dew I."/>
            <person name="Miller J.R."/>
            <person name="Flanigan M.J."/>
            <person name="Edwards N.J."/>
            <person name="Bolanos R."/>
            <person name="Fasulo D."/>
            <person name="Halldorsson B.V."/>
            <person name="Hannenhalli S."/>
            <person name="Turner R."/>
            <person name="Yooseph S."/>
            <person name="Lu F."/>
            <person name="Nusskern D.R."/>
            <person name="Shue B.C."/>
            <person name="Zheng X.H."/>
            <person name="Zhong F."/>
            <person name="Delcher A.L."/>
            <person name="Huson D.H."/>
            <person name="Kravitz S.A."/>
            <person name="Mouchard L."/>
            <person name="Reinert K."/>
            <person name="Remington K.A."/>
            <person name="Clark A.G."/>
            <person name="Waterman M.S."/>
            <person name="Eichler E.E."/>
            <person name="Adams M.D."/>
            <person name="Hunkapiller M.W."/>
            <person name="Myers E.W."/>
            <person name="Venter J.C."/>
        </authorList>
    </citation>
    <scope>NUCLEOTIDE SEQUENCE [LARGE SCALE GENOMIC DNA]</scope>
</reference>
<reference key="6">
    <citation type="journal article" date="2004" name="Genome Res.">
        <title>The status, quality, and expansion of the NIH full-length cDNA project: the Mammalian Gene Collection (MGC).</title>
        <authorList>
            <consortium name="The MGC Project Team"/>
        </authorList>
    </citation>
    <scope>NUCLEOTIDE SEQUENCE [LARGE SCALE MRNA] (ISOFORMS 1 AND 2)</scope>
    <source>
        <tissue>Lung</tissue>
        <tissue>Lymph</tissue>
    </source>
</reference>
<reference key="7">
    <citation type="journal article" date="1999" name="FEBS Lett.">
        <title>A family of structurally related RING finger proteins interacts specifically with the ubiquitin-conjugating enzyme UbcM4.</title>
        <authorList>
            <person name="Martinez-Noel G."/>
            <person name="Niedenthal R."/>
            <person name="Tamura T."/>
            <person name="Harbers K."/>
        </authorList>
    </citation>
    <scope>IDENTIFICATION</scope>
</reference>
<reference key="8">
    <citation type="journal article" date="2001" name="J. Biol. Chem.">
        <title>Interaction of the RING finger-related U-box motif of a nuclear dot protein with ubiquitin-conjugating enzymes.</title>
        <authorList>
            <person name="Pringa E."/>
            <person name="Martinez-Noel G."/>
            <person name="Muller U."/>
            <person name="Harbers K."/>
        </authorList>
    </citation>
    <scope>INTERACTION WITH UBE2L3</scope>
    <scope>SUBCELLULAR LOCATION</scope>
    <scope>DOMAIN</scope>
</reference>
<reference key="9">
    <citation type="journal article" date="2001" name="J. Biol. Chem.">
        <title>U box proteins as a new family of ubiquitin-protein ligases.</title>
        <authorList>
            <person name="Hatakeyama S."/>
            <person name="Yada M."/>
            <person name="Matsumoto M."/>
            <person name="Ishida N."/>
            <person name="Nakayama K.I."/>
        </authorList>
    </citation>
    <scope>TISSUE SPECIFICITY</scope>
    <scope>DOMAIN</scope>
</reference>
<reference key="10">
    <citation type="journal article" date="2014" name="Mol. Cell. Proteomics">
        <title>Immunoaffinity enrichment and mass spectrometry analysis of protein methylation.</title>
        <authorList>
            <person name="Guo A."/>
            <person name="Gu H."/>
            <person name="Zhou J."/>
            <person name="Mulhern D."/>
            <person name="Wang Y."/>
            <person name="Lee K.A."/>
            <person name="Yang V."/>
            <person name="Aguiar M."/>
            <person name="Kornhauser J."/>
            <person name="Jia X."/>
            <person name="Ren J."/>
            <person name="Beausoleil S.A."/>
            <person name="Silva J.C."/>
            <person name="Vemulapalli V."/>
            <person name="Bedford M.T."/>
            <person name="Comb M.J."/>
        </authorList>
    </citation>
    <scope>METHYLATION [LARGE SCALE ANALYSIS] AT ARG-451</scope>
    <scope>IDENTIFICATION BY MASS SPECTROMETRY [LARGE SCALE ANALYSIS]</scope>
    <source>
        <tissue>Colon carcinoma</tissue>
    </source>
</reference>
<evidence type="ECO:0000250" key="1">
    <source>
        <dbReference type="UniProtKB" id="Q925F4"/>
    </source>
</evidence>
<evidence type="ECO:0000255" key="2">
    <source>
        <dbReference type="PROSITE-ProRule" id="PRU00175"/>
    </source>
</evidence>
<evidence type="ECO:0000269" key="3">
    <source>
    </source>
</evidence>
<evidence type="ECO:0000269" key="4">
    <source>
    </source>
</evidence>
<evidence type="ECO:0000303" key="5">
    <source>
    </source>
</evidence>
<evidence type="ECO:0000303" key="6">
    <source>
    </source>
</evidence>
<evidence type="ECO:0000303" key="7">
    <source>
    </source>
</evidence>
<evidence type="ECO:0000303" key="8">
    <source>
    </source>
</evidence>
<evidence type="ECO:0000305" key="9"/>
<evidence type="ECO:0000312" key="10">
    <source>
        <dbReference type="EMBL" id="BAA74883.2"/>
    </source>
</evidence>
<evidence type="ECO:0000312" key="11">
    <source>
        <dbReference type="EMBL" id="CAG33370.1"/>
    </source>
</evidence>
<evidence type="ECO:0000312" key="12">
    <source>
        <dbReference type="HGNC" id="HGNC:17777"/>
    </source>
</evidence>
<evidence type="ECO:0007744" key="13">
    <source>
    </source>
</evidence>
<protein>
    <recommendedName>
        <fullName evidence="9">RING finger protein 37</fullName>
        <ecNumber evidence="1">2.3.2.27</ecNumber>
    </recommendedName>
    <alternativeName>
        <fullName evidence="9">RING-type E3 ubiquitin transferase RNF37</fullName>
    </alternativeName>
    <alternativeName>
        <fullName evidence="12">U-box domain-containing protein 5</fullName>
    </alternativeName>
    <alternativeName>
        <fullName evidence="5">UbcM4-interacting protein 5</fullName>
        <shortName evidence="6">hUIP5</shortName>
    </alternativeName>
    <alternativeName>
        <fullName evidence="11">Ubiquitin-conjugating enzyme 7-interacting protein 5</fullName>
    </alternativeName>
</protein>